<gene>
    <name type="primary">Igh-1a</name>
</gene>
<reference key="1">
    <citation type="journal article" date="1988" name="Gene">
        <title>Evolution of the rat immunoglobulin gamma heavy-chain gene family.</title>
        <authorList>
            <person name="Brueggemann M."/>
        </authorList>
    </citation>
    <scope>NUCLEOTIDE SEQUENCE [GENOMIC DNA]</scope>
</reference>
<reference key="2">
    <citation type="journal article" date="1986" name="Proc. Natl. Acad. Sci. U.S.A.">
        <title>Immunoglobulin heavy chain locus of the rat: striking homology to mouse antibody genes.</title>
        <authorList>
            <person name="Bruggemann M."/>
            <person name="Free J."/>
            <person name="Diamond A."/>
            <person name="Howard J."/>
            <person name="Cobbold S."/>
            <person name="Waldmann H."/>
        </authorList>
    </citation>
    <scope>NUCLEOTIDE SEQUENCE [GENOMIC DNA] OF 227-333</scope>
</reference>
<proteinExistence type="evidence at protein level"/>
<keyword id="KW-0002">3D-structure</keyword>
<keyword id="KW-1015">Disulfide bond</keyword>
<keyword id="KW-0393">Immunoglobulin domain</keyword>
<keyword id="KW-1185">Reference proteome</keyword>
<keyword id="KW-0677">Repeat</keyword>
<sequence>AQTTAPSVYPLAPGCGDTTSSTVTLGCLVKGYFPEPVTVTWNSGALSSDVHTFPAVLQSGLYTLTSSVTSSTWPSQTVTCNVAHPASSTKVDKKVERRNGGIGHKCPTCPTCHKCPVPELLGGPSVFIFPPKPKDILLISQNAKVTCVVVDVSEEEPDVQFSWFVNNVEVHTAQTQPREEQYNSTFRVVSALPIQHQDWMSGKEFKCKVNNKALPSPIEKTISKPKGLVRKPQVYVMGPPTEQLTEQTVSLTCLTSGFLPNDIGVEWTSNGHIEKNYKNTEPVMDSDGSFFMYSKLNVERSRWDSRAPFVCSVVHEGLHNHHVEKSISRPPGK</sequence>
<accession>P20761</accession>
<evidence type="ECO:0000255" key="1">
    <source>
        <dbReference type="PROSITE-ProRule" id="PRU00114"/>
    </source>
</evidence>
<evidence type="ECO:0007829" key="2">
    <source>
        <dbReference type="PDB" id="1BFO"/>
    </source>
</evidence>
<evidence type="ECO:0007829" key="3">
    <source>
        <dbReference type="PDB" id="1C5D"/>
    </source>
</evidence>
<feature type="chain" id="PRO_0000153593" description="Ig gamma-2B chain C region">
    <location>
        <begin position="1" status="less than"/>
        <end position="333"/>
    </location>
</feature>
<feature type="domain" description="Ig-like 1">
    <location>
        <begin position="6"/>
        <end position="96"/>
    </location>
</feature>
<feature type="domain" description="Ig-like 2">
    <location>
        <begin position="124"/>
        <end position="223"/>
    </location>
</feature>
<feature type="domain" description="Ig-like 3">
    <location>
        <begin position="232"/>
        <end position="328"/>
    </location>
</feature>
<feature type="disulfide bond" description="Interchain (with a light chain)" evidence="1">
    <location>
        <position position="15"/>
    </location>
</feature>
<feature type="disulfide bond" evidence="1">
    <location>
        <begin position="27"/>
        <end position="80"/>
    </location>
</feature>
<feature type="disulfide bond" description="Interchain (with a heavy chain)" evidence="1">
    <location>
        <position position="106"/>
    </location>
</feature>
<feature type="disulfide bond" description="Interchain (with a heavy chain)" evidence="1">
    <location>
        <position position="109"/>
    </location>
</feature>
<feature type="disulfide bond" description="Interchain (with a heavy chain)" evidence="1">
    <location>
        <position position="112"/>
    </location>
</feature>
<feature type="disulfide bond" description="Interchain (with a heavy chain)" evidence="1">
    <location>
        <position position="115"/>
    </location>
</feature>
<feature type="disulfide bond" evidence="1">
    <location>
        <begin position="147"/>
        <end position="207"/>
    </location>
</feature>
<feature type="disulfide bond" evidence="1">
    <location>
        <begin position="253"/>
        <end position="311"/>
    </location>
</feature>
<feature type="non-terminal residue">
    <location>
        <position position="1"/>
    </location>
</feature>
<feature type="strand" evidence="3">
    <location>
        <begin position="8"/>
        <end position="11"/>
    </location>
</feature>
<feature type="strand" evidence="3">
    <location>
        <begin position="21"/>
        <end position="35"/>
    </location>
</feature>
<feature type="strand" evidence="3">
    <location>
        <begin position="38"/>
        <end position="41"/>
    </location>
</feature>
<feature type="helix" evidence="3">
    <location>
        <begin position="42"/>
        <end position="44"/>
    </location>
</feature>
<feature type="strand" evidence="2">
    <location>
        <begin position="48"/>
        <end position="52"/>
    </location>
</feature>
<feature type="strand" evidence="3">
    <location>
        <begin position="56"/>
        <end position="58"/>
    </location>
</feature>
<feature type="strand" evidence="3">
    <location>
        <begin position="61"/>
        <end position="72"/>
    </location>
</feature>
<feature type="turn" evidence="3">
    <location>
        <begin position="73"/>
        <end position="75"/>
    </location>
</feature>
<feature type="strand" evidence="3">
    <location>
        <begin position="79"/>
        <end position="84"/>
    </location>
</feature>
<feature type="helix" evidence="3">
    <location>
        <begin position="85"/>
        <end position="87"/>
    </location>
</feature>
<feature type="strand" evidence="3">
    <location>
        <begin position="89"/>
        <end position="94"/>
    </location>
</feature>
<name>IGG2B_RAT</name>
<dbReference type="PIR" id="PS0018">
    <property type="entry name" value="PS0018"/>
</dbReference>
<dbReference type="PDB" id="1BFO">
    <property type="method" value="X-ray"/>
    <property type="resolution" value="2.60 A"/>
    <property type="chains" value="B/D/F/H=1-95"/>
</dbReference>
<dbReference type="PDB" id="1C5D">
    <property type="method" value="X-ray"/>
    <property type="resolution" value="2.40 A"/>
    <property type="chains" value="B/H=1-98"/>
</dbReference>
<dbReference type="PDB" id="2ARJ">
    <property type="method" value="X-ray"/>
    <property type="resolution" value="2.88 A"/>
    <property type="chains" value="B/H=1-98"/>
</dbReference>
<dbReference type="PDB" id="3B9K">
    <property type="method" value="X-ray"/>
    <property type="resolution" value="2.70 A"/>
    <property type="chains" value="D/H=1-96"/>
</dbReference>
<dbReference type="PDBsum" id="1BFO"/>
<dbReference type="PDBsum" id="1C5D"/>
<dbReference type="PDBsum" id="2ARJ"/>
<dbReference type="PDBsum" id="3B9K"/>
<dbReference type="EMDB" id="EMD-44386"/>
<dbReference type="SMR" id="P20761"/>
<dbReference type="FunCoup" id="P20761">
    <property type="interactions" value="90"/>
</dbReference>
<dbReference type="IntAct" id="P20761">
    <property type="interactions" value="2"/>
</dbReference>
<dbReference type="MINT" id="P20761"/>
<dbReference type="STRING" id="10116.ENSRNOP00000044037"/>
<dbReference type="GlyGen" id="P20761">
    <property type="glycosylation" value="1 site, 1 O-linked glycan (1 site)"/>
</dbReference>
<dbReference type="PaxDb" id="10116-ENSRNOP00000044037"/>
<dbReference type="AGR" id="RGD:1359202"/>
<dbReference type="RGD" id="1305720">
    <property type="gene designation" value="Igh-1a"/>
</dbReference>
<dbReference type="eggNOG" id="ENOG502R54U">
    <property type="taxonomic scope" value="Eukaryota"/>
</dbReference>
<dbReference type="HOGENOM" id="CLU_030625_0_2_1"/>
<dbReference type="InParanoid" id="P20761"/>
<dbReference type="EvolutionaryTrace" id="P20761"/>
<dbReference type="PRO" id="PR:P20761"/>
<dbReference type="Proteomes" id="UP000002494">
    <property type="component" value="Chromosome 6"/>
</dbReference>
<dbReference type="Bgee" id="ENSRNOG00000048402">
    <property type="expression patterns" value="Expressed in spleen and 17 other cell types or tissues"/>
</dbReference>
<dbReference type="GO" id="GO:0042571">
    <property type="term" value="C:immunoglobulin complex, circulating"/>
    <property type="evidence" value="ECO:0000318"/>
    <property type="project" value="GO_Central"/>
</dbReference>
<dbReference type="GO" id="GO:0003823">
    <property type="term" value="F:antigen binding"/>
    <property type="evidence" value="ECO:0000318"/>
    <property type="project" value="GO_Central"/>
</dbReference>
<dbReference type="GO" id="GO:0034987">
    <property type="term" value="F:immunoglobulin receptor binding"/>
    <property type="evidence" value="ECO:0000318"/>
    <property type="project" value="GO_Central"/>
</dbReference>
<dbReference type="GO" id="GO:0019731">
    <property type="term" value="P:antibacterial humoral response"/>
    <property type="evidence" value="ECO:0000318"/>
    <property type="project" value="GO_Central"/>
</dbReference>
<dbReference type="GO" id="GO:0006958">
    <property type="term" value="P:complement activation, classical pathway"/>
    <property type="evidence" value="ECO:0000318"/>
    <property type="project" value="GO_Central"/>
</dbReference>
<dbReference type="CDD" id="cd21817">
    <property type="entry name" value="IgC1_CH1_IgEG"/>
    <property type="match status" value="1"/>
</dbReference>
<dbReference type="CDD" id="cd05768">
    <property type="entry name" value="IgC1_CH3_IgAGD_CH4_IgAEM"/>
    <property type="match status" value="1"/>
</dbReference>
<dbReference type="FunFam" id="2.60.40.10:FF:001739">
    <property type="entry name" value="Ig gamma-2A chain C region"/>
    <property type="match status" value="1"/>
</dbReference>
<dbReference type="FunFam" id="2.60.40.10:FF:000463">
    <property type="entry name" value="Immunoglobulin heavy constant gamma 1"/>
    <property type="match status" value="1"/>
</dbReference>
<dbReference type="FunFam" id="2.60.40.10:FF:001129">
    <property type="entry name" value="Immunoglobulin heavy constant gamma 1"/>
    <property type="match status" value="1"/>
</dbReference>
<dbReference type="Gene3D" id="2.60.40.10">
    <property type="entry name" value="Immunoglobulins"/>
    <property type="match status" value="3"/>
</dbReference>
<dbReference type="InterPro" id="IPR007110">
    <property type="entry name" value="Ig-like_dom"/>
</dbReference>
<dbReference type="InterPro" id="IPR036179">
    <property type="entry name" value="Ig-like_dom_sf"/>
</dbReference>
<dbReference type="InterPro" id="IPR013783">
    <property type="entry name" value="Ig-like_fold"/>
</dbReference>
<dbReference type="InterPro" id="IPR003006">
    <property type="entry name" value="Ig/MHC_CS"/>
</dbReference>
<dbReference type="InterPro" id="IPR003597">
    <property type="entry name" value="Ig_C1-set"/>
</dbReference>
<dbReference type="InterPro" id="IPR050380">
    <property type="entry name" value="Immune_Resp_Modulators"/>
</dbReference>
<dbReference type="PANTHER" id="PTHR23411">
    <property type="entry name" value="TAPASIN"/>
    <property type="match status" value="1"/>
</dbReference>
<dbReference type="Pfam" id="PF07654">
    <property type="entry name" value="C1-set"/>
    <property type="match status" value="3"/>
</dbReference>
<dbReference type="SMART" id="SM00407">
    <property type="entry name" value="IGc1"/>
    <property type="match status" value="3"/>
</dbReference>
<dbReference type="SUPFAM" id="SSF48726">
    <property type="entry name" value="Immunoglobulin"/>
    <property type="match status" value="3"/>
</dbReference>
<dbReference type="PROSITE" id="PS50835">
    <property type="entry name" value="IG_LIKE"/>
    <property type="match status" value="3"/>
</dbReference>
<dbReference type="PROSITE" id="PS00290">
    <property type="entry name" value="IG_MHC"/>
    <property type="match status" value="1"/>
</dbReference>
<protein>
    <recommendedName>
        <fullName>Ig gamma-2B chain C region</fullName>
    </recommendedName>
    <alternativeName>
        <fullName>Immunoglobulin heavy chain 1a</fullName>
    </alternativeName>
</protein>
<organism>
    <name type="scientific">Rattus norvegicus</name>
    <name type="common">Rat</name>
    <dbReference type="NCBI Taxonomy" id="10116"/>
    <lineage>
        <taxon>Eukaryota</taxon>
        <taxon>Metazoa</taxon>
        <taxon>Chordata</taxon>
        <taxon>Craniata</taxon>
        <taxon>Vertebrata</taxon>
        <taxon>Euteleostomi</taxon>
        <taxon>Mammalia</taxon>
        <taxon>Eutheria</taxon>
        <taxon>Euarchontoglires</taxon>
        <taxon>Glires</taxon>
        <taxon>Rodentia</taxon>
        <taxon>Myomorpha</taxon>
        <taxon>Muroidea</taxon>
        <taxon>Muridae</taxon>
        <taxon>Murinae</taxon>
        <taxon>Rattus</taxon>
    </lineage>
</organism>